<protein>
    <recommendedName>
        <fullName evidence="4">Secreted RxLR effector protein 102</fullName>
    </recommendedName>
</protein>
<accession>P0CV40</accession>
<sequence>MRGGYYVLTALFVVASSEIAAESGHQLQANNHGRKIDDDAAMKSLSTRFLRESRGVHGNVANEERSVYSVLAGMINEGIKKMPRTAEVLKRKSRVIDPSDKIPHEAKLVEEMFHAAKAKETMESAEEYNELKTATEDAEKALKKHWNPSKTAVKGDDSHDIHSNEMLSVKNWWVDFTGLKSTVVDDTQDDMVDSVHNAFVTVCDKNIKPTREETSFLSRLLNWKVANSPRSVHKQRLIQRAQRYVILDLWKMQNTCKVWPEWEKLSDTLKFSVLDYLLNLHYQRLVRMYNIFARKRPDRNPAPLNPELNLVGNTGTSAAMAVNKNSKGQIPYPSEPLNAASTSKGERFHLIKRSKRTSDGNTDIASLPSIRSKVRSSKSVMPLLTESTTSGDHSVPAKRSRFSSSGLSRAFSPYKPGDHTFITENSRLSFDGPRSAVDPYTQSKKHSTKALAPSSTVFTPEDVDTKLSLGGIYDRST</sequence>
<name>RL102_PLAVT</name>
<organism>
    <name type="scientific">Plasmopara viticola</name>
    <name type="common">Downy mildew of grapevine</name>
    <name type="synonym">Botrytis viticola</name>
    <dbReference type="NCBI Taxonomy" id="143451"/>
    <lineage>
        <taxon>Eukaryota</taxon>
        <taxon>Sar</taxon>
        <taxon>Stramenopiles</taxon>
        <taxon>Oomycota</taxon>
        <taxon>Peronosporales</taxon>
        <taxon>Peronosporaceae</taxon>
        <taxon>Plasmopara</taxon>
    </lineage>
</organism>
<dbReference type="SMR" id="P0CV40"/>
<dbReference type="GO" id="GO:0005576">
    <property type="term" value="C:extracellular region"/>
    <property type="evidence" value="ECO:0007669"/>
    <property type="project" value="UniProtKB-SubCell"/>
</dbReference>
<dbReference type="GO" id="GO:0042025">
    <property type="term" value="C:host cell nucleus"/>
    <property type="evidence" value="ECO:0007669"/>
    <property type="project" value="UniProtKB-SubCell"/>
</dbReference>
<comment type="function">
    <text evidence="3">Secreted effector that acts as an elicitor that induces cell death in host plant cells.</text>
</comment>
<comment type="subcellular location">
    <subcellularLocation>
        <location evidence="3">Secreted</location>
    </subcellularLocation>
    <subcellularLocation>
        <location evidence="3">Host nucleus</location>
    </subcellularLocation>
</comment>
<comment type="domain">
    <text evidence="6">The RxLR-dEER motif acts to carry the protein into the host cell cytoplasm through binding to cell surface phosphatidylinositol-3-phosphate.</text>
</comment>
<comment type="similarity">
    <text evidence="5">Belongs to the RxLR effector family.</text>
</comment>
<evidence type="ECO:0000255" key="1"/>
<evidence type="ECO:0000256" key="2">
    <source>
        <dbReference type="SAM" id="MobiDB-lite"/>
    </source>
</evidence>
<evidence type="ECO:0000269" key="3">
    <source>
    </source>
</evidence>
<evidence type="ECO:0000303" key="4">
    <source>
    </source>
</evidence>
<evidence type="ECO:0000305" key="5"/>
<evidence type="ECO:0000305" key="6">
    <source>
    </source>
</evidence>
<keyword id="KW-1048">Host nucleus</keyword>
<keyword id="KW-0964">Secreted</keyword>
<keyword id="KW-0732">Signal</keyword>
<keyword id="KW-0843">Virulence</keyword>
<proteinExistence type="evidence at transcript level"/>
<gene>
    <name evidence="4" type="primary">RXLR102</name>
</gene>
<feature type="signal peptide" evidence="1">
    <location>
        <begin position="1"/>
        <end position="20"/>
    </location>
</feature>
<feature type="chain" id="PRO_0000447949" description="Secreted RxLR effector protein 102">
    <location>
        <begin position="21"/>
        <end position="477"/>
    </location>
</feature>
<feature type="region of interest" description="Disordered" evidence="2">
    <location>
        <begin position="326"/>
        <end position="345"/>
    </location>
</feature>
<feature type="region of interest" description="Disordered" evidence="2">
    <location>
        <begin position="351"/>
        <end position="370"/>
    </location>
</feature>
<feature type="region of interest" description="Disordered" evidence="2">
    <location>
        <begin position="376"/>
        <end position="401"/>
    </location>
</feature>
<feature type="region of interest" description="Disordered" evidence="2">
    <location>
        <begin position="433"/>
        <end position="455"/>
    </location>
</feature>
<feature type="short sequence motif" description="RxLR-dEER" evidence="6">
    <location>
        <begin position="48"/>
        <end position="65"/>
    </location>
</feature>
<reference key="1">
    <citation type="journal article" date="2018" name="Front. Plant Sci.">
        <title>In planta functional analysis and subcellular localization of the oomycete pathogen Plasmopara viticola candidate RXLR effector repertoire.</title>
        <authorList>
            <person name="Liu Y."/>
            <person name="Lan X."/>
            <person name="Song S."/>
            <person name="Yin L."/>
            <person name="Dry I.B."/>
            <person name="Qu J."/>
            <person name="Xiang J."/>
            <person name="Lu J."/>
        </authorList>
    </citation>
    <scope>NUCLEOTIDE SEQUENCE [MRNA]</scope>
    <scope>DOMAIN</scope>
    <scope>FUNCTION</scope>
    <scope>SUBCELLULAR LOCATION</scope>
</reference>